<accession>O66757</accession>
<dbReference type="EMBL" id="AE000657">
    <property type="protein sequence ID" value="AAC06721.1"/>
    <property type="molecule type" value="Genomic_DNA"/>
</dbReference>
<dbReference type="PIR" id="A70341">
    <property type="entry name" value="A70341"/>
</dbReference>
<dbReference type="RefSeq" id="NP_213317.1">
    <property type="nucleotide sequence ID" value="NC_000918.1"/>
</dbReference>
<dbReference type="RefSeq" id="WP_010880255.1">
    <property type="nucleotide sequence ID" value="NC_000918.1"/>
</dbReference>
<dbReference type="SMR" id="O66757"/>
<dbReference type="FunCoup" id="O66757">
    <property type="interactions" value="196"/>
</dbReference>
<dbReference type="STRING" id="224324.aq_449"/>
<dbReference type="EnsemblBacteria" id="AAC06721">
    <property type="protein sequence ID" value="AAC06721"/>
    <property type="gene ID" value="aq_449"/>
</dbReference>
<dbReference type="KEGG" id="aae:aq_449"/>
<dbReference type="eggNOG" id="COG0239">
    <property type="taxonomic scope" value="Bacteria"/>
</dbReference>
<dbReference type="HOGENOM" id="CLU_114342_2_3_0"/>
<dbReference type="InParanoid" id="O66757"/>
<dbReference type="OrthoDB" id="9815830at2"/>
<dbReference type="Proteomes" id="UP000000798">
    <property type="component" value="Chromosome"/>
</dbReference>
<dbReference type="GO" id="GO:0005886">
    <property type="term" value="C:plasma membrane"/>
    <property type="evidence" value="ECO:0000318"/>
    <property type="project" value="GO_Central"/>
</dbReference>
<dbReference type="GO" id="GO:0062054">
    <property type="term" value="F:fluoride channel activity"/>
    <property type="evidence" value="ECO:0007669"/>
    <property type="project" value="UniProtKB-UniRule"/>
</dbReference>
<dbReference type="GO" id="GO:1903425">
    <property type="term" value="F:fluoride transmembrane transporter activity"/>
    <property type="evidence" value="ECO:0000318"/>
    <property type="project" value="GO_Central"/>
</dbReference>
<dbReference type="GO" id="GO:0046872">
    <property type="term" value="F:metal ion binding"/>
    <property type="evidence" value="ECO:0007669"/>
    <property type="project" value="UniProtKB-KW"/>
</dbReference>
<dbReference type="GO" id="GO:0140114">
    <property type="term" value="P:cellular detoxification of fluoride"/>
    <property type="evidence" value="ECO:0007669"/>
    <property type="project" value="UniProtKB-UniRule"/>
</dbReference>
<dbReference type="GO" id="GO:1903424">
    <property type="term" value="P:fluoride transmembrane transport"/>
    <property type="evidence" value="ECO:0000318"/>
    <property type="project" value="GO_Central"/>
</dbReference>
<dbReference type="HAMAP" id="MF_00454">
    <property type="entry name" value="FluC"/>
    <property type="match status" value="1"/>
</dbReference>
<dbReference type="InterPro" id="IPR003691">
    <property type="entry name" value="FluC"/>
</dbReference>
<dbReference type="NCBIfam" id="TIGR00494">
    <property type="entry name" value="crcB"/>
    <property type="match status" value="1"/>
</dbReference>
<dbReference type="PANTHER" id="PTHR28259">
    <property type="entry name" value="FLUORIDE EXPORT PROTEIN 1-RELATED"/>
    <property type="match status" value="1"/>
</dbReference>
<dbReference type="PANTHER" id="PTHR28259:SF18">
    <property type="entry name" value="FLUORIDE-SPECIFIC ION CHANNEL FLUC"/>
    <property type="match status" value="1"/>
</dbReference>
<dbReference type="Pfam" id="PF02537">
    <property type="entry name" value="CRCB"/>
    <property type="match status" value="1"/>
</dbReference>
<name>FLUC_AQUAE</name>
<organism>
    <name type="scientific">Aquifex aeolicus (strain VF5)</name>
    <dbReference type="NCBI Taxonomy" id="224324"/>
    <lineage>
        <taxon>Bacteria</taxon>
        <taxon>Pseudomonadati</taxon>
        <taxon>Aquificota</taxon>
        <taxon>Aquificia</taxon>
        <taxon>Aquificales</taxon>
        <taxon>Aquificaceae</taxon>
        <taxon>Aquifex</taxon>
    </lineage>
</organism>
<comment type="function">
    <text evidence="1">Fluoride-specific ion channel. Important for reducing fluoride concentration in the cell, thus reducing its toxicity.</text>
</comment>
<comment type="catalytic activity">
    <reaction evidence="1">
        <text>fluoride(in) = fluoride(out)</text>
        <dbReference type="Rhea" id="RHEA:76159"/>
        <dbReference type="ChEBI" id="CHEBI:17051"/>
    </reaction>
    <physiologicalReaction direction="left-to-right" evidence="1">
        <dbReference type="Rhea" id="RHEA:76160"/>
    </physiologicalReaction>
</comment>
<comment type="activity regulation">
    <text evidence="1">Na(+) is not transported, but it plays an essential structural role and its presence is essential for fluoride channel function.</text>
</comment>
<comment type="subcellular location">
    <subcellularLocation>
        <location evidence="1">Cell inner membrane</location>
        <topology evidence="1">Multi-pass membrane protein</topology>
    </subcellularLocation>
</comment>
<comment type="similarity">
    <text evidence="1">Belongs to the fluoride channel Fluc/FEX (TC 1.A.43) family.</text>
</comment>
<evidence type="ECO:0000255" key="1">
    <source>
        <dbReference type="HAMAP-Rule" id="MF_00454"/>
    </source>
</evidence>
<sequence>MGVVFAVALGGAIGSALRFLLSKVVQEHFGISFPVGTLFVNLVGAFFIGFFFAYLVDKLAVNPHARALLITGLLGGLTTFSTYSYESFSLLREGETLKFLAYTLGTNVLGIFFTFLGYILGESL</sequence>
<keyword id="KW-0997">Cell inner membrane</keyword>
<keyword id="KW-1003">Cell membrane</keyword>
<keyword id="KW-0407">Ion channel</keyword>
<keyword id="KW-0406">Ion transport</keyword>
<keyword id="KW-0472">Membrane</keyword>
<keyword id="KW-0479">Metal-binding</keyword>
<keyword id="KW-1185">Reference proteome</keyword>
<keyword id="KW-0915">Sodium</keyword>
<keyword id="KW-0812">Transmembrane</keyword>
<keyword id="KW-1133">Transmembrane helix</keyword>
<keyword id="KW-0813">Transport</keyword>
<protein>
    <recommendedName>
        <fullName evidence="1">Fluoride-specific ion channel FluC</fullName>
    </recommendedName>
</protein>
<gene>
    <name evidence="1" type="primary">fluC</name>
    <name evidence="1" type="synonym">crcB</name>
    <name type="ordered locus">aq_449</name>
</gene>
<proteinExistence type="inferred from homology"/>
<reference key="1">
    <citation type="journal article" date="1998" name="Nature">
        <title>The complete genome of the hyperthermophilic bacterium Aquifex aeolicus.</title>
        <authorList>
            <person name="Deckert G."/>
            <person name="Warren P.V."/>
            <person name="Gaasterland T."/>
            <person name="Young W.G."/>
            <person name="Lenox A.L."/>
            <person name="Graham D.E."/>
            <person name="Overbeek R."/>
            <person name="Snead M.A."/>
            <person name="Keller M."/>
            <person name="Aujay M."/>
            <person name="Huber R."/>
            <person name="Feldman R.A."/>
            <person name="Short J.M."/>
            <person name="Olsen G.J."/>
            <person name="Swanson R.V."/>
        </authorList>
    </citation>
    <scope>NUCLEOTIDE SEQUENCE [LARGE SCALE GENOMIC DNA]</scope>
    <source>
        <strain>VF5</strain>
    </source>
</reference>
<feature type="chain" id="PRO_0000110037" description="Fluoride-specific ion channel FluC">
    <location>
        <begin position="1"/>
        <end position="124"/>
    </location>
</feature>
<feature type="transmembrane region" description="Helical" evidence="1">
    <location>
        <begin position="1"/>
        <end position="21"/>
    </location>
</feature>
<feature type="transmembrane region" description="Helical" evidence="1">
    <location>
        <begin position="35"/>
        <end position="55"/>
    </location>
</feature>
<feature type="transmembrane region" description="Helical" evidence="1">
    <location>
        <begin position="68"/>
        <end position="88"/>
    </location>
</feature>
<feature type="transmembrane region" description="Helical" evidence="1">
    <location>
        <begin position="99"/>
        <end position="119"/>
    </location>
</feature>
<feature type="binding site" evidence="1">
    <location>
        <position position="75"/>
    </location>
    <ligand>
        <name>Na(+)</name>
        <dbReference type="ChEBI" id="CHEBI:29101"/>
        <note>structural</note>
    </ligand>
</feature>
<feature type="binding site" evidence="1">
    <location>
        <position position="78"/>
    </location>
    <ligand>
        <name>Na(+)</name>
        <dbReference type="ChEBI" id="CHEBI:29101"/>
        <note>structural</note>
    </ligand>
</feature>